<keyword id="KW-0285">Flavoprotein</keyword>
<keyword id="KW-0288">FMN</keyword>
<keyword id="KW-0560">Oxidoreductase</keyword>
<keyword id="KW-0664">Pyridoxine biosynthesis</keyword>
<gene>
    <name evidence="1" type="primary">pdxH</name>
    <name type="ordered locus">EcHS_A1714</name>
</gene>
<sequence length="218" mass="25545">MSDNDELQQIAHLRREYTKGGLRRRDLPADPLTLFERWLSQACEAKLADPTAMVVATVDEHGQPYQRIVLLKHYDEKGMVFYTNLGSRKAHQIENNPRVSLLFPWHTLERQVMVIGKAERLSTLEVMKYFHSRPRDSQIGAWVSKQSSRISARGILESKFLELKQKFQQGEVPLPSFWGGFRVSLEQIEFWQGGEHRLHDRFLYQRENDAWKIDRLAP</sequence>
<dbReference type="EC" id="1.4.3.5" evidence="1"/>
<dbReference type="EMBL" id="CP000802">
    <property type="protein sequence ID" value="ABV06035.1"/>
    <property type="molecule type" value="Genomic_DNA"/>
</dbReference>
<dbReference type="RefSeq" id="WP_001282319.1">
    <property type="nucleotide sequence ID" value="NC_009800.1"/>
</dbReference>
<dbReference type="SMR" id="A8A0I1"/>
<dbReference type="GeneID" id="75171699"/>
<dbReference type="KEGG" id="ecx:EcHS_A1714"/>
<dbReference type="HOGENOM" id="CLU_032263_2_2_6"/>
<dbReference type="UniPathway" id="UPA01068">
    <property type="reaction ID" value="UER00304"/>
</dbReference>
<dbReference type="UniPathway" id="UPA01068">
    <property type="reaction ID" value="UER00305"/>
</dbReference>
<dbReference type="GO" id="GO:0010181">
    <property type="term" value="F:FMN binding"/>
    <property type="evidence" value="ECO:0007669"/>
    <property type="project" value="UniProtKB-UniRule"/>
</dbReference>
<dbReference type="GO" id="GO:0004733">
    <property type="term" value="F:pyridoxamine phosphate oxidase activity"/>
    <property type="evidence" value="ECO:0007669"/>
    <property type="project" value="UniProtKB-UniRule"/>
</dbReference>
<dbReference type="GO" id="GO:0008615">
    <property type="term" value="P:pyridoxine biosynthetic process"/>
    <property type="evidence" value="ECO:0007669"/>
    <property type="project" value="UniProtKB-KW"/>
</dbReference>
<dbReference type="FunFam" id="2.30.110.10:FF:000001">
    <property type="entry name" value="Pyridoxine/pyridoxamine 5'-phosphate oxidase"/>
    <property type="match status" value="1"/>
</dbReference>
<dbReference type="Gene3D" id="2.30.110.10">
    <property type="entry name" value="Electron Transport, Fmn-binding Protein, Chain A"/>
    <property type="match status" value="1"/>
</dbReference>
<dbReference type="HAMAP" id="MF_01629">
    <property type="entry name" value="PdxH"/>
    <property type="match status" value="1"/>
</dbReference>
<dbReference type="InterPro" id="IPR000659">
    <property type="entry name" value="Pyridox_Oxase"/>
</dbReference>
<dbReference type="InterPro" id="IPR019740">
    <property type="entry name" value="Pyridox_Oxase_CS"/>
</dbReference>
<dbReference type="InterPro" id="IPR011576">
    <property type="entry name" value="Pyridox_Oxase_N"/>
</dbReference>
<dbReference type="InterPro" id="IPR019576">
    <property type="entry name" value="Pyridoxamine_oxidase_dimer_C"/>
</dbReference>
<dbReference type="InterPro" id="IPR012349">
    <property type="entry name" value="Split_barrel_FMN-bd"/>
</dbReference>
<dbReference type="NCBIfam" id="TIGR00558">
    <property type="entry name" value="pdxH"/>
    <property type="match status" value="1"/>
</dbReference>
<dbReference type="NCBIfam" id="NF004231">
    <property type="entry name" value="PRK05679.1"/>
    <property type="match status" value="1"/>
</dbReference>
<dbReference type="PANTHER" id="PTHR10851:SF0">
    <property type="entry name" value="PYRIDOXINE-5'-PHOSPHATE OXIDASE"/>
    <property type="match status" value="1"/>
</dbReference>
<dbReference type="PANTHER" id="PTHR10851">
    <property type="entry name" value="PYRIDOXINE-5-PHOSPHATE OXIDASE"/>
    <property type="match status" value="1"/>
</dbReference>
<dbReference type="Pfam" id="PF10590">
    <property type="entry name" value="PNP_phzG_C"/>
    <property type="match status" value="1"/>
</dbReference>
<dbReference type="Pfam" id="PF01243">
    <property type="entry name" value="PNPOx_N"/>
    <property type="match status" value="1"/>
</dbReference>
<dbReference type="PIRSF" id="PIRSF000190">
    <property type="entry name" value="Pyd_amn-ph_oxd"/>
    <property type="match status" value="1"/>
</dbReference>
<dbReference type="SUPFAM" id="SSF50475">
    <property type="entry name" value="FMN-binding split barrel"/>
    <property type="match status" value="1"/>
</dbReference>
<dbReference type="PROSITE" id="PS01064">
    <property type="entry name" value="PYRIDOX_OXIDASE"/>
    <property type="match status" value="1"/>
</dbReference>
<name>PDXH_ECOHS</name>
<feature type="chain" id="PRO_1000069692" description="Pyridoxine/pyridoxamine 5'-phosphate oxidase">
    <location>
        <begin position="1"/>
        <end position="218"/>
    </location>
</feature>
<feature type="binding site" evidence="1">
    <location>
        <begin position="14"/>
        <end position="17"/>
    </location>
    <ligand>
        <name>substrate</name>
    </ligand>
</feature>
<feature type="binding site" evidence="1">
    <location>
        <begin position="67"/>
        <end position="72"/>
    </location>
    <ligand>
        <name>FMN</name>
        <dbReference type="ChEBI" id="CHEBI:58210"/>
    </ligand>
</feature>
<feature type="binding site" evidence="1">
    <location>
        <position position="72"/>
    </location>
    <ligand>
        <name>substrate</name>
    </ligand>
</feature>
<feature type="binding site" evidence="1">
    <location>
        <begin position="82"/>
        <end position="83"/>
    </location>
    <ligand>
        <name>FMN</name>
        <dbReference type="ChEBI" id="CHEBI:58210"/>
    </ligand>
</feature>
<feature type="binding site" evidence="1">
    <location>
        <position position="88"/>
    </location>
    <ligand>
        <name>FMN</name>
        <dbReference type="ChEBI" id="CHEBI:58210"/>
    </ligand>
</feature>
<feature type="binding site" evidence="1">
    <location>
        <position position="89"/>
    </location>
    <ligand>
        <name>FMN</name>
        <dbReference type="ChEBI" id="CHEBI:58210"/>
    </ligand>
</feature>
<feature type="binding site" evidence="1">
    <location>
        <position position="111"/>
    </location>
    <ligand>
        <name>FMN</name>
        <dbReference type="ChEBI" id="CHEBI:58210"/>
    </ligand>
</feature>
<feature type="binding site" evidence="1">
    <location>
        <position position="129"/>
    </location>
    <ligand>
        <name>substrate</name>
    </ligand>
</feature>
<feature type="binding site" evidence="1">
    <location>
        <position position="133"/>
    </location>
    <ligand>
        <name>substrate</name>
    </ligand>
</feature>
<feature type="binding site" evidence="1">
    <location>
        <position position="137"/>
    </location>
    <ligand>
        <name>substrate</name>
    </ligand>
</feature>
<feature type="binding site" evidence="1">
    <location>
        <begin position="146"/>
        <end position="147"/>
    </location>
    <ligand>
        <name>FMN</name>
        <dbReference type="ChEBI" id="CHEBI:58210"/>
    </ligand>
</feature>
<feature type="binding site" evidence="1">
    <location>
        <position position="191"/>
    </location>
    <ligand>
        <name>FMN</name>
        <dbReference type="ChEBI" id="CHEBI:58210"/>
    </ligand>
</feature>
<feature type="binding site" evidence="1">
    <location>
        <begin position="197"/>
        <end position="199"/>
    </location>
    <ligand>
        <name>substrate</name>
    </ligand>
</feature>
<feature type="binding site" evidence="1">
    <location>
        <position position="201"/>
    </location>
    <ligand>
        <name>FMN</name>
        <dbReference type="ChEBI" id="CHEBI:58210"/>
    </ligand>
</feature>
<organism>
    <name type="scientific">Escherichia coli O9:H4 (strain HS)</name>
    <dbReference type="NCBI Taxonomy" id="331112"/>
    <lineage>
        <taxon>Bacteria</taxon>
        <taxon>Pseudomonadati</taxon>
        <taxon>Pseudomonadota</taxon>
        <taxon>Gammaproteobacteria</taxon>
        <taxon>Enterobacterales</taxon>
        <taxon>Enterobacteriaceae</taxon>
        <taxon>Escherichia</taxon>
    </lineage>
</organism>
<protein>
    <recommendedName>
        <fullName evidence="1">Pyridoxine/pyridoxamine 5'-phosphate oxidase</fullName>
        <ecNumber evidence="1">1.4.3.5</ecNumber>
    </recommendedName>
    <alternativeName>
        <fullName evidence="1">PNP/PMP oxidase</fullName>
        <shortName evidence="1">PNPOx</shortName>
    </alternativeName>
    <alternativeName>
        <fullName evidence="1">Pyridoxal 5'-phosphate synthase</fullName>
    </alternativeName>
</protein>
<reference key="1">
    <citation type="journal article" date="2008" name="J. Bacteriol.">
        <title>The pangenome structure of Escherichia coli: comparative genomic analysis of E. coli commensal and pathogenic isolates.</title>
        <authorList>
            <person name="Rasko D.A."/>
            <person name="Rosovitz M.J."/>
            <person name="Myers G.S.A."/>
            <person name="Mongodin E.F."/>
            <person name="Fricke W.F."/>
            <person name="Gajer P."/>
            <person name="Crabtree J."/>
            <person name="Sebaihia M."/>
            <person name="Thomson N.R."/>
            <person name="Chaudhuri R."/>
            <person name="Henderson I.R."/>
            <person name="Sperandio V."/>
            <person name="Ravel J."/>
        </authorList>
    </citation>
    <scope>NUCLEOTIDE SEQUENCE [LARGE SCALE GENOMIC DNA]</scope>
    <source>
        <strain>HS</strain>
    </source>
</reference>
<proteinExistence type="inferred from homology"/>
<comment type="function">
    <text evidence="1">Catalyzes the oxidation of either pyridoxine 5'-phosphate (PNP) or pyridoxamine 5'-phosphate (PMP) into pyridoxal 5'-phosphate (PLP).</text>
</comment>
<comment type="catalytic activity">
    <reaction evidence="1">
        <text>pyridoxamine 5'-phosphate + O2 + H2O = pyridoxal 5'-phosphate + H2O2 + NH4(+)</text>
        <dbReference type="Rhea" id="RHEA:15817"/>
        <dbReference type="ChEBI" id="CHEBI:15377"/>
        <dbReference type="ChEBI" id="CHEBI:15379"/>
        <dbReference type="ChEBI" id="CHEBI:16240"/>
        <dbReference type="ChEBI" id="CHEBI:28938"/>
        <dbReference type="ChEBI" id="CHEBI:58451"/>
        <dbReference type="ChEBI" id="CHEBI:597326"/>
        <dbReference type="EC" id="1.4.3.5"/>
    </reaction>
</comment>
<comment type="catalytic activity">
    <reaction evidence="1">
        <text>pyridoxine 5'-phosphate + O2 = pyridoxal 5'-phosphate + H2O2</text>
        <dbReference type="Rhea" id="RHEA:15149"/>
        <dbReference type="ChEBI" id="CHEBI:15379"/>
        <dbReference type="ChEBI" id="CHEBI:16240"/>
        <dbReference type="ChEBI" id="CHEBI:58589"/>
        <dbReference type="ChEBI" id="CHEBI:597326"/>
        <dbReference type="EC" id="1.4.3.5"/>
    </reaction>
</comment>
<comment type="cofactor">
    <cofactor evidence="1">
        <name>FMN</name>
        <dbReference type="ChEBI" id="CHEBI:58210"/>
    </cofactor>
    <text evidence="1">Binds 1 FMN per subunit.</text>
</comment>
<comment type="pathway">
    <text evidence="1">Cofactor metabolism; pyridoxal 5'-phosphate salvage; pyridoxal 5'-phosphate from pyridoxamine 5'-phosphate: step 1/1.</text>
</comment>
<comment type="pathway">
    <text evidence="1">Cofactor metabolism; pyridoxal 5'-phosphate salvage; pyridoxal 5'-phosphate from pyridoxine 5'-phosphate: step 1/1.</text>
</comment>
<comment type="subunit">
    <text evidence="1">Homodimer.</text>
</comment>
<comment type="similarity">
    <text evidence="1">Belongs to the pyridoxamine 5'-phosphate oxidase family.</text>
</comment>
<accession>A8A0I1</accession>
<evidence type="ECO:0000255" key="1">
    <source>
        <dbReference type="HAMAP-Rule" id="MF_01629"/>
    </source>
</evidence>